<keyword id="KW-0028">Amino-acid biosynthesis</keyword>
<keyword id="KW-0055">Arginine biosynthesis</keyword>
<keyword id="KW-0067">ATP-binding</keyword>
<keyword id="KW-0963">Cytoplasm</keyword>
<keyword id="KW-0436">Ligase</keyword>
<keyword id="KW-0547">Nucleotide-binding</keyword>
<accession>A6QAX6</accession>
<evidence type="ECO:0000255" key="1">
    <source>
        <dbReference type="HAMAP-Rule" id="MF_00005"/>
    </source>
</evidence>
<name>ASSY_SULNB</name>
<protein>
    <recommendedName>
        <fullName evidence="1">Argininosuccinate synthase</fullName>
        <ecNumber evidence="1">6.3.4.5</ecNumber>
    </recommendedName>
    <alternativeName>
        <fullName evidence="1">Citrulline--aspartate ligase</fullName>
    </alternativeName>
</protein>
<proteinExistence type="inferred from homology"/>
<dbReference type="EC" id="6.3.4.5" evidence="1"/>
<dbReference type="EMBL" id="AP009179">
    <property type="protein sequence ID" value="BAF72635.1"/>
    <property type="molecule type" value="Genomic_DNA"/>
</dbReference>
<dbReference type="RefSeq" id="WP_012083445.1">
    <property type="nucleotide sequence ID" value="NC_009663.1"/>
</dbReference>
<dbReference type="SMR" id="A6QAX6"/>
<dbReference type="STRING" id="387093.SUN_1685"/>
<dbReference type="KEGG" id="sun:SUN_1685"/>
<dbReference type="eggNOG" id="COG0137">
    <property type="taxonomic scope" value="Bacteria"/>
</dbReference>
<dbReference type="HOGENOM" id="CLU_032784_4_2_7"/>
<dbReference type="OrthoDB" id="9801641at2"/>
<dbReference type="UniPathway" id="UPA00068">
    <property type="reaction ID" value="UER00113"/>
</dbReference>
<dbReference type="Proteomes" id="UP000006378">
    <property type="component" value="Chromosome"/>
</dbReference>
<dbReference type="GO" id="GO:0005737">
    <property type="term" value="C:cytoplasm"/>
    <property type="evidence" value="ECO:0007669"/>
    <property type="project" value="UniProtKB-SubCell"/>
</dbReference>
<dbReference type="GO" id="GO:0004055">
    <property type="term" value="F:argininosuccinate synthase activity"/>
    <property type="evidence" value="ECO:0007669"/>
    <property type="project" value="UniProtKB-UniRule"/>
</dbReference>
<dbReference type="GO" id="GO:0005524">
    <property type="term" value="F:ATP binding"/>
    <property type="evidence" value="ECO:0007669"/>
    <property type="project" value="UniProtKB-UniRule"/>
</dbReference>
<dbReference type="GO" id="GO:0000053">
    <property type="term" value="P:argininosuccinate metabolic process"/>
    <property type="evidence" value="ECO:0007669"/>
    <property type="project" value="TreeGrafter"/>
</dbReference>
<dbReference type="GO" id="GO:0006526">
    <property type="term" value="P:L-arginine biosynthetic process"/>
    <property type="evidence" value="ECO:0007669"/>
    <property type="project" value="UniProtKB-UniRule"/>
</dbReference>
<dbReference type="GO" id="GO:0000050">
    <property type="term" value="P:urea cycle"/>
    <property type="evidence" value="ECO:0007669"/>
    <property type="project" value="TreeGrafter"/>
</dbReference>
<dbReference type="CDD" id="cd01999">
    <property type="entry name" value="ASS"/>
    <property type="match status" value="1"/>
</dbReference>
<dbReference type="FunFam" id="3.40.50.620:FF:000019">
    <property type="entry name" value="Argininosuccinate synthase"/>
    <property type="match status" value="1"/>
</dbReference>
<dbReference type="FunFam" id="3.90.1260.10:FF:000007">
    <property type="entry name" value="Argininosuccinate synthase"/>
    <property type="match status" value="1"/>
</dbReference>
<dbReference type="Gene3D" id="3.90.1260.10">
    <property type="entry name" value="Argininosuccinate synthetase, chain A, domain 2"/>
    <property type="match status" value="1"/>
</dbReference>
<dbReference type="Gene3D" id="3.40.50.620">
    <property type="entry name" value="HUPs"/>
    <property type="match status" value="1"/>
</dbReference>
<dbReference type="Gene3D" id="1.20.5.470">
    <property type="entry name" value="Single helix bin"/>
    <property type="match status" value="1"/>
</dbReference>
<dbReference type="HAMAP" id="MF_00005">
    <property type="entry name" value="Arg_succ_synth_type1"/>
    <property type="match status" value="1"/>
</dbReference>
<dbReference type="InterPro" id="IPR048268">
    <property type="entry name" value="Arginosuc_syn_C"/>
</dbReference>
<dbReference type="InterPro" id="IPR048267">
    <property type="entry name" value="Arginosuc_syn_N"/>
</dbReference>
<dbReference type="InterPro" id="IPR001518">
    <property type="entry name" value="Arginosuc_synth"/>
</dbReference>
<dbReference type="InterPro" id="IPR018223">
    <property type="entry name" value="Arginosuc_synth_CS"/>
</dbReference>
<dbReference type="InterPro" id="IPR023434">
    <property type="entry name" value="Arginosuc_synth_type_1_subfam"/>
</dbReference>
<dbReference type="InterPro" id="IPR024074">
    <property type="entry name" value="AS_cat/multimer_dom_body"/>
</dbReference>
<dbReference type="InterPro" id="IPR014729">
    <property type="entry name" value="Rossmann-like_a/b/a_fold"/>
</dbReference>
<dbReference type="NCBIfam" id="TIGR00032">
    <property type="entry name" value="argG"/>
    <property type="match status" value="1"/>
</dbReference>
<dbReference type="NCBIfam" id="NF001770">
    <property type="entry name" value="PRK00509.1"/>
    <property type="match status" value="1"/>
</dbReference>
<dbReference type="PANTHER" id="PTHR11587">
    <property type="entry name" value="ARGININOSUCCINATE SYNTHASE"/>
    <property type="match status" value="1"/>
</dbReference>
<dbReference type="PANTHER" id="PTHR11587:SF2">
    <property type="entry name" value="ARGININOSUCCINATE SYNTHASE"/>
    <property type="match status" value="1"/>
</dbReference>
<dbReference type="Pfam" id="PF20979">
    <property type="entry name" value="Arginosuc_syn_C"/>
    <property type="match status" value="1"/>
</dbReference>
<dbReference type="Pfam" id="PF00764">
    <property type="entry name" value="Arginosuc_synth"/>
    <property type="match status" value="1"/>
</dbReference>
<dbReference type="SUPFAM" id="SSF52402">
    <property type="entry name" value="Adenine nucleotide alpha hydrolases-like"/>
    <property type="match status" value="1"/>
</dbReference>
<dbReference type="SUPFAM" id="SSF69864">
    <property type="entry name" value="Argininosuccinate synthetase, C-terminal domain"/>
    <property type="match status" value="1"/>
</dbReference>
<dbReference type="PROSITE" id="PS00564">
    <property type="entry name" value="ARGININOSUCCIN_SYN_1"/>
    <property type="match status" value="1"/>
</dbReference>
<dbReference type="PROSITE" id="PS00565">
    <property type="entry name" value="ARGININOSUCCIN_SYN_2"/>
    <property type="match status" value="1"/>
</dbReference>
<comment type="catalytic activity">
    <reaction evidence="1">
        <text>L-citrulline + L-aspartate + ATP = 2-(N(omega)-L-arginino)succinate + AMP + diphosphate + H(+)</text>
        <dbReference type="Rhea" id="RHEA:10932"/>
        <dbReference type="ChEBI" id="CHEBI:15378"/>
        <dbReference type="ChEBI" id="CHEBI:29991"/>
        <dbReference type="ChEBI" id="CHEBI:30616"/>
        <dbReference type="ChEBI" id="CHEBI:33019"/>
        <dbReference type="ChEBI" id="CHEBI:57472"/>
        <dbReference type="ChEBI" id="CHEBI:57743"/>
        <dbReference type="ChEBI" id="CHEBI:456215"/>
        <dbReference type="EC" id="6.3.4.5"/>
    </reaction>
</comment>
<comment type="pathway">
    <text evidence="1">Amino-acid biosynthesis; L-arginine biosynthesis; L-arginine from L-ornithine and carbamoyl phosphate: step 2/3.</text>
</comment>
<comment type="subunit">
    <text evidence="1">Homotetramer.</text>
</comment>
<comment type="subcellular location">
    <subcellularLocation>
        <location evidence="1">Cytoplasm</location>
    </subcellularLocation>
</comment>
<comment type="similarity">
    <text evidence="1">Belongs to the argininosuccinate synthase family. Type 1 subfamily.</text>
</comment>
<sequence length="447" mass="50701">MAKRKISKAVLAYSGGLDTSIILKWLQDEYECEVVTFTADLGQGEEVEPARQKALDMGIKPENIFILDLREEFVRDFVFPMFRANAIYEGEYLLGTSIARPLISKKQIEIAHQTGADAVSHGATGKGNDQVRFELGYLALDPDIAVIAPWREWDLNSRTKLLAYAQEHGINIDNKGKPKPYSMDANLLHISYEGEHLENPYAEPEEDMWLWSVSPENAPDEPEYITISYKNGDPIAINREEMSPATILETLNTYGKKHGIGRIDIVENRMVGMKARGCYETPGGTIMLKAHRAIESITLDREEAHMKDELMPKYAKLIYNGMWWSPERKMLQAAIDATQENVEGTVKLKLYKGNVIVVGRKSEVSLYSEEHSTFEADDVYNQKDAEGFIRLNALRFIIEGKKQPERIKSLIGDYEETEVCRIETGSITICERIKRFFGFGKKTDKNA</sequence>
<organism>
    <name type="scientific">Sulfurovum sp. (strain NBC37-1)</name>
    <dbReference type="NCBI Taxonomy" id="387093"/>
    <lineage>
        <taxon>Bacteria</taxon>
        <taxon>Pseudomonadati</taxon>
        <taxon>Campylobacterota</taxon>
        <taxon>Epsilonproteobacteria</taxon>
        <taxon>Campylobacterales</taxon>
        <taxon>Sulfurovaceae</taxon>
        <taxon>Sulfurovum</taxon>
    </lineage>
</organism>
<reference key="1">
    <citation type="journal article" date="2007" name="Proc. Natl. Acad. Sci. U.S.A.">
        <title>Deep-sea vent epsilon-proteobacterial genomes provide insights into emergence of pathogens.</title>
        <authorList>
            <person name="Nakagawa S."/>
            <person name="Takaki Y."/>
            <person name="Shimamura S."/>
            <person name="Reysenbach A.-L."/>
            <person name="Takai K."/>
            <person name="Horikoshi K."/>
        </authorList>
    </citation>
    <scope>NUCLEOTIDE SEQUENCE [LARGE SCALE GENOMIC DNA]</scope>
    <source>
        <strain>NBC37-1</strain>
    </source>
</reference>
<feature type="chain" id="PRO_0000329473" description="Argininosuccinate synthase">
    <location>
        <begin position="1"/>
        <end position="447"/>
    </location>
</feature>
<feature type="binding site" evidence="1">
    <location>
        <begin position="12"/>
        <end position="20"/>
    </location>
    <ligand>
        <name>ATP</name>
        <dbReference type="ChEBI" id="CHEBI:30616"/>
    </ligand>
</feature>
<feature type="binding site" evidence="1">
    <location>
        <position position="39"/>
    </location>
    <ligand>
        <name>ATP</name>
        <dbReference type="ChEBI" id="CHEBI:30616"/>
    </ligand>
</feature>
<feature type="binding site" evidence="1">
    <location>
        <position position="92"/>
    </location>
    <ligand>
        <name>L-citrulline</name>
        <dbReference type="ChEBI" id="CHEBI:57743"/>
    </ligand>
</feature>
<feature type="binding site" evidence="1">
    <location>
        <position position="97"/>
    </location>
    <ligand>
        <name>L-citrulline</name>
        <dbReference type="ChEBI" id="CHEBI:57743"/>
    </ligand>
</feature>
<feature type="binding site" evidence="1">
    <location>
        <position position="122"/>
    </location>
    <ligand>
        <name>ATP</name>
        <dbReference type="ChEBI" id="CHEBI:30616"/>
    </ligand>
</feature>
<feature type="binding site" evidence="1">
    <location>
        <position position="124"/>
    </location>
    <ligand>
        <name>L-aspartate</name>
        <dbReference type="ChEBI" id="CHEBI:29991"/>
    </ligand>
</feature>
<feature type="binding site" evidence="1">
    <location>
        <position position="128"/>
    </location>
    <ligand>
        <name>L-aspartate</name>
        <dbReference type="ChEBI" id="CHEBI:29991"/>
    </ligand>
</feature>
<feature type="binding site" evidence="1">
    <location>
        <position position="128"/>
    </location>
    <ligand>
        <name>L-citrulline</name>
        <dbReference type="ChEBI" id="CHEBI:57743"/>
    </ligand>
</feature>
<feature type="binding site" evidence="1">
    <location>
        <position position="129"/>
    </location>
    <ligand>
        <name>L-aspartate</name>
        <dbReference type="ChEBI" id="CHEBI:29991"/>
    </ligand>
</feature>
<feature type="binding site" evidence="1">
    <location>
        <position position="132"/>
    </location>
    <ligand>
        <name>L-citrulline</name>
        <dbReference type="ChEBI" id="CHEBI:57743"/>
    </ligand>
</feature>
<feature type="binding site" evidence="1">
    <location>
        <position position="182"/>
    </location>
    <ligand>
        <name>L-citrulline</name>
        <dbReference type="ChEBI" id="CHEBI:57743"/>
    </ligand>
</feature>
<feature type="binding site" evidence="1">
    <location>
        <position position="191"/>
    </location>
    <ligand>
        <name>L-citrulline</name>
        <dbReference type="ChEBI" id="CHEBI:57743"/>
    </ligand>
</feature>
<feature type="binding site" evidence="1">
    <location>
        <position position="267"/>
    </location>
    <ligand>
        <name>L-citrulline</name>
        <dbReference type="ChEBI" id="CHEBI:57743"/>
    </ligand>
</feature>
<feature type="binding site" evidence="1">
    <location>
        <position position="279"/>
    </location>
    <ligand>
        <name>L-citrulline</name>
        <dbReference type="ChEBI" id="CHEBI:57743"/>
    </ligand>
</feature>
<gene>
    <name evidence="1" type="primary">argG</name>
    <name type="ordered locus">SUN_1685</name>
</gene>